<organism>
    <name type="scientific">Bos taurus</name>
    <name type="common">Bovine</name>
    <dbReference type="NCBI Taxonomy" id="9913"/>
    <lineage>
        <taxon>Eukaryota</taxon>
        <taxon>Metazoa</taxon>
        <taxon>Chordata</taxon>
        <taxon>Craniata</taxon>
        <taxon>Vertebrata</taxon>
        <taxon>Euteleostomi</taxon>
        <taxon>Mammalia</taxon>
        <taxon>Eutheria</taxon>
        <taxon>Laurasiatheria</taxon>
        <taxon>Artiodactyla</taxon>
        <taxon>Ruminantia</taxon>
        <taxon>Pecora</taxon>
        <taxon>Bovidae</taxon>
        <taxon>Bovinae</taxon>
        <taxon>Bos</taxon>
    </lineage>
</organism>
<comment type="function">
    <text evidence="3">May inhibit cardiomyocyte growth.</text>
</comment>
<comment type="subunit">
    <text evidence="2">Interacts with PSP94/MSMB.</text>
</comment>
<comment type="subcellular location">
    <subcellularLocation>
        <location evidence="3">Secreted</location>
    </subcellularLocation>
</comment>
<comment type="PTM">
    <text evidence="2">N-glycosylated.</text>
</comment>
<comment type="similarity">
    <text evidence="6">Belongs to the CRISP family.</text>
</comment>
<sequence>MHGSGSLLACLLPPLLLLGAAPGPAGALSEEEKHVMVELHNLYRTQVSPPATNMLQMRWDEELAAFAKAYAQQCVWGHNKERGRRGENLFAITGEGLDVPLAMEEWHHEREHYNLSAISCAAGQMCGHYTQVVWAKTERIGCGSHFCEKLQGVEETNIHLLVCNYEPPGNVKGQRPYQEGTPCSQCPLGYHCKNSLCEPIRGPEEAQDLSSLVPEAPSSLATEASSSRREGIDSSLATEPPPFLVTEVSGSLATKVLSSVETKAPSSLVTEDSPSMATKTPLSLATKVPSVLATHSLLSLDKRPATLLPKSTHDPIPKSADKEASSTRMPSRIPESSLHPKISLMGTREPLPLSQEEGEAEAELAHCSEILASVFPAQEKPGELQTTLKHKGHSSSKSLSNSPSASATANAVGGRTLALQSSLPDAEGPGKHGFRSGSNASPGHVGGLLLGLLLLLPLVLAGIF</sequence>
<feature type="signal peptide" evidence="1">
    <location>
        <begin position="1"/>
        <end position="27"/>
    </location>
</feature>
<feature type="chain" id="PRO_0000287632" description="Peptidase inhibitor 16">
    <location>
        <begin position="28"/>
        <end position="464"/>
    </location>
</feature>
<feature type="domain" description="SCP">
    <location>
        <begin position="37"/>
        <end position="165"/>
    </location>
</feature>
<feature type="region of interest" description="Disordered" evidence="5">
    <location>
        <begin position="208"/>
        <end position="241"/>
    </location>
</feature>
<feature type="region of interest" description="Disordered" evidence="5">
    <location>
        <begin position="260"/>
        <end position="281"/>
    </location>
</feature>
<feature type="region of interest" description="Disordered" evidence="5">
    <location>
        <begin position="304"/>
        <end position="347"/>
    </location>
</feature>
<feature type="region of interest" description="Disordered" evidence="5">
    <location>
        <begin position="386"/>
        <end position="412"/>
    </location>
</feature>
<feature type="compositionally biased region" description="Basic and acidic residues" evidence="5">
    <location>
        <begin position="311"/>
        <end position="325"/>
    </location>
</feature>
<feature type="compositionally biased region" description="Low complexity" evidence="5">
    <location>
        <begin position="395"/>
        <end position="411"/>
    </location>
</feature>
<feature type="glycosylation site" description="N-linked (GlcNAc...) asparagine" evidence="4">
    <location>
        <position position="114"/>
    </location>
</feature>
<protein>
    <recommendedName>
        <fullName>Peptidase inhibitor 16</fullName>
        <shortName>PI-16</shortName>
    </recommendedName>
    <cdAntigenName>CD364</cdAntigenName>
</protein>
<evidence type="ECO:0000250" key="1"/>
<evidence type="ECO:0000250" key="2">
    <source>
        <dbReference type="UniProtKB" id="Q6UXB8"/>
    </source>
</evidence>
<evidence type="ECO:0000250" key="3">
    <source>
        <dbReference type="UniProtKB" id="Q9ET66"/>
    </source>
</evidence>
<evidence type="ECO:0000255" key="4"/>
<evidence type="ECO:0000256" key="5">
    <source>
        <dbReference type="SAM" id="MobiDB-lite"/>
    </source>
</evidence>
<evidence type="ECO:0000305" key="6"/>
<dbReference type="EMBL" id="BT021763">
    <property type="protein sequence ID" value="AAX46610.1"/>
    <property type="molecule type" value="mRNA"/>
</dbReference>
<dbReference type="EMBL" id="BC119955">
    <property type="protein sequence ID" value="AAI19956.1"/>
    <property type="molecule type" value="mRNA"/>
</dbReference>
<dbReference type="RefSeq" id="NP_001019658.1">
    <property type="nucleotide sequence ID" value="NM_001024487.1"/>
</dbReference>
<dbReference type="RefSeq" id="XP_005223367.2">
    <property type="nucleotide sequence ID" value="XM_005223310.3"/>
</dbReference>
<dbReference type="RefSeq" id="XP_005223368.2">
    <property type="nucleotide sequence ID" value="XM_005223311.2"/>
</dbReference>
<dbReference type="SMR" id="Q58D34"/>
<dbReference type="FunCoup" id="Q58D34">
    <property type="interactions" value="44"/>
</dbReference>
<dbReference type="STRING" id="9913.ENSBTAP00000002703"/>
<dbReference type="GlyCosmos" id="Q58D34">
    <property type="glycosylation" value="1 site, No reported glycans"/>
</dbReference>
<dbReference type="GlyGen" id="Q58D34">
    <property type="glycosylation" value="1 site"/>
</dbReference>
<dbReference type="PaxDb" id="9913-ENSBTAP00000002703"/>
<dbReference type="Ensembl" id="ENSBTAT00000047585.4">
    <property type="protein sequence ID" value="ENSBTAP00000044778.3"/>
    <property type="gene ID" value="ENSBTAG00000002092.7"/>
</dbReference>
<dbReference type="GeneID" id="507058"/>
<dbReference type="KEGG" id="bta:507058"/>
<dbReference type="CTD" id="221476"/>
<dbReference type="VEuPathDB" id="HostDB:ENSBTAG00000002092"/>
<dbReference type="VGNC" id="VGNC:32853">
    <property type="gene designation" value="PI16"/>
</dbReference>
<dbReference type="eggNOG" id="KOG3017">
    <property type="taxonomic scope" value="Eukaryota"/>
</dbReference>
<dbReference type="GeneTree" id="ENSGT00940000162458"/>
<dbReference type="HOGENOM" id="CLU_049124_0_0_1"/>
<dbReference type="InParanoid" id="Q58D34"/>
<dbReference type="OMA" id="QLAVEQW"/>
<dbReference type="OrthoDB" id="337038at2759"/>
<dbReference type="TreeFam" id="TF316148"/>
<dbReference type="Proteomes" id="UP000009136">
    <property type="component" value="Chromosome 23"/>
</dbReference>
<dbReference type="Bgee" id="ENSBTAG00000002092">
    <property type="expression patterns" value="Expressed in trachea and 97 other cell types or tissues"/>
</dbReference>
<dbReference type="GO" id="GO:0005615">
    <property type="term" value="C:extracellular space"/>
    <property type="evidence" value="ECO:0000318"/>
    <property type="project" value="GO_Central"/>
</dbReference>
<dbReference type="GO" id="GO:0030414">
    <property type="term" value="F:peptidase inhibitor activity"/>
    <property type="evidence" value="ECO:0007669"/>
    <property type="project" value="UniProtKB-KW"/>
</dbReference>
<dbReference type="GO" id="GO:0061052">
    <property type="term" value="P:negative regulation of cell growth involved in cardiac muscle cell development"/>
    <property type="evidence" value="ECO:0007669"/>
    <property type="project" value="Ensembl"/>
</dbReference>
<dbReference type="CDD" id="cd05559">
    <property type="entry name" value="CAP_PI16_HrTT-1"/>
    <property type="match status" value="1"/>
</dbReference>
<dbReference type="FunFam" id="3.40.33.10:FF:000011">
    <property type="entry name" value="Peptidase inhibitor 16"/>
    <property type="match status" value="1"/>
</dbReference>
<dbReference type="Gene3D" id="3.40.33.10">
    <property type="entry name" value="CAP"/>
    <property type="match status" value="1"/>
</dbReference>
<dbReference type="InterPro" id="IPR018244">
    <property type="entry name" value="Allrgn_V5/Tpx1_CS"/>
</dbReference>
<dbReference type="InterPro" id="IPR014044">
    <property type="entry name" value="CAP_dom"/>
</dbReference>
<dbReference type="InterPro" id="IPR035940">
    <property type="entry name" value="CAP_sf"/>
</dbReference>
<dbReference type="InterPro" id="IPR001283">
    <property type="entry name" value="CRISP-related"/>
</dbReference>
<dbReference type="PANTHER" id="PTHR10334">
    <property type="entry name" value="CYSTEINE-RICH SECRETORY PROTEIN-RELATED"/>
    <property type="match status" value="1"/>
</dbReference>
<dbReference type="Pfam" id="PF00188">
    <property type="entry name" value="CAP"/>
    <property type="match status" value="1"/>
</dbReference>
<dbReference type="PRINTS" id="PR00837">
    <property type="entry name" value="V5TPXLIKE"/>
</dbReference>
<dbReference type="SMART" id="SM00198">
    <property type="entry name" value="SCP"/>
    <property type="match status" value="1"/>
</dbReference>
<dbReference type="SUPFAM" id="SSF55797">
    <property type="entry name" value="PR-1-like"/>
    <property type="match status" value="1"/>
</dbReference>
<dbReference type="PROSITE" id="PS01009">
    <property type="entry name" value="CRISP_1"/>
    <property type="match status" value="1"/>
</dbReference>
<dbReference type="PROSITE" id="PS01010">
    <property type="entry name" value="CRISP_2"/>
    <property type="match status" value="1"/>
</dbReference>
<gene>
    <name type="primary">PI16</name>
</gene>
<accession>Q58D34</accession>
<proteinExistence type="evidence at transcript level"/>
<reference key="1">
    <citation type="journal article" date="2005" name="BMC Genomics">
        <title>Characterization of 954 bovine full-CDS cDNA sequences.</title>
        <authorList>
            <person name="Harhay G.P."/>
            <person name="Sonstegard T.S."/>
            <person name="Keele J.W."/>
            <person name="Heaton M.P."/>
            <person name="Clawson M.L."/>
            <person name="Snelling W.M."/>
            <person name="Wiedmann R.T."/>
            <person name="Van Tassell C.P."/>
            <person name="Smith T.P.L."/>
        </authorList>
    </citation>
    <scope>NUCLEOTIDE SEQUENCE [LARGE SCALE MRNA]</scope>
</reference>
<reference key="2">
    <citation type="submission" date="2006-08" db="EMBL/GenBank/DDBJ databases">
        <authorList>
            <consortium name="NIH - Mammalian Gene Collection (MGC) project"/>
        </authorList>
    </citation>
    <scope>NUCLEOTIDE SEQUENCE [LARGE SCALE MRNA]</scope>
    <source>
        <strain>Hereford</strain>
        <tissue>Fetal skin</tissue>
    </source>
</reference>
<keyword id="KW-0325">Glycoprotein</keyword>
<keyword id="KW-0646">Protease inhibitor</keyword>
<keyword id="KW-1185">Reference proteome</keyword>
<keyword id="KW-0964">Secreted</keyword>
<keyword id="KW-0732">Signal</keyword>
<name>PI16_BOVIN</name>